<name>STCQ_EMENI</name>
<keyword id="KW-0503">Monooxygenase</keyword>
<keyword id="KW-0560">Oxidoreductase</keyword>
<keyword id="KW-1185">Reference proteome</keyword>
<accession>Q00713</accession>
<accession>C8VDT2</accession>
<accession>Q5AV70</accession>
<dbReference type="EC" id="1.-.-.-" evidence="13"/>
<dbReference type="EMBL" id="U34740">
    <property type="protein sequence ID" value="AAC49202.1"/>
    <property type="molecule type" value="Genomic_DNA"/>
</dbReference>
<dbReference type="EMBL" id="AACD01000132">
    <property type="protein sequence ID" value="EAA61598.1"/>
    <property type="molecule type" value="Genomic_DNA"/>
</dbReference>
<dbReference type="EMBL" id="BN001304">
    <property type="protein sequence ID" value="CBF80153.1"/>
    <property type="molecule type" value="Genomic_DNA"/>
</dbReference>
<dbReference type="RefSeq" id="XP_681079.1">
    <property type="nucleotide sequence ID" value="XM_675987.1"/>
</dbReference>
<dbReference type="SMR" id="Q00713"/>
<dbReference type="STRING" id="227321.Q00713"/>
<dbReference type="EnsemblFungi" id="CBF80153">
    <property type="protein sequence ID" value="CBF80153"/>
    <property type="gene ID" value="ANIA_07810"/>
</dbReference>
<dbReference type="KEGG" id="ani:ANIA_07810"/>
<dbReference type="VEuPathDB" id="FungiDB:AN7810"/>
<dbReference type="eggNOG" id="ENOG502SJWN">
    <property type="taxonomic scope" value="Eukaryota"/>
</dbReference>
<dbReference type="HOGENOM" id="CLU_090039_1_0_1"/>
<dbReference type="InParanoid" id="Q00713"/>
<dbReference type="OMA" id="AERHWIS"/>
<dbReference type="OrthoDB" id="10254221at2759"/>
<dbReference type="UniPathway" id="UPA00377"/>
<dbReference type="Proteomes" id="UP000000560">
    <property type="component" value="Chromosome IV"/>
</dbReference>
<dbReference type="GO" id="GO:0004497">
    <property type="term" value="F:monooxygenase activity"/>
    <property type="evidence" value="ECO:0007669"/>
    <property type="project" value="UniProtKB-KW"/>
</dbReference>
<dbReference type="GO" id="GO:0045461">
    <property type="term" value="P:sterigmatocystin biosynthetic process"/>
    <property type="evidence" value="ECO:0000270"/>
    <property type="project" value="GO_Central"/>
</dbReference>
<dbReference type="Gene3D" id="3.40.50.720">
    <property type="entry name" value="NAD(P)-binding Rossmann-like Domain"/>
    <property type="match status" value="1"/>
</dbReference>
<dbReference type="InterPro" id="IPR016040">
    <property type="entry name" value="NAD(P)-bd_dom"/>
</dbReference>
<dbReference type="InterPro" id="IPR036291">
    <property type="entry name" value="NAD(P)-bd_dom_sf"/>
</dbReference>
<dbReference type="PANTHER" id="PTHR15020">
    <property type="entry name" value="FLAVIN REDUCTASE-RELATED"/>
    <property type="match status" value="1"/>
</dbReference>
<dbReference type="PANTHER" id="PTHR15020:SF50">
    <property type="entry name" value="UPF0659 PROTEIN YMR090W"/>
    <property type="match status" value="1"/>
</dbReference>
<dbReference type="Pfam" id="PF13460">
    <property type="entry name" value="NAD_binding_10"/>
    <property type="match status" value="1"/>
</dbReference>
<dbReference type="SUPFAM" id="SSF51735">
    <property type="entry name" value="NAD(P)-binding Rossmann-fold domains"/>
    <property type="match status" value="1"/>
</dbReference>
<sequence length="274" mass="30255">MPSYAVLGATGNTGRAIVQVLLDRADTDTRIHICAYCRSKEKLFRVCPAAETSKSLSVFQGRLDDDSLIDECLRGTDAVFLVVAIVDNMPGCTVAMQTAEAVVASLQRLRATDPAIRLPRLVILSSASLEPTFCNDVPAPVHWVLKTAVSHLYRDLAAAEAYLRAQSDWLSATFVKPGGLVHDQARGHKVCLDRAQTPLSFLDLAAGMVEVADADDGRYHMRSVSVVPASRVAIFPWDGVYYTFTGLLFHFCPWTYRFLGEYKLQSRKERDKQA</sequence>
<reference key="1">
    <citation type="journal article" date="1996" name="Proc. Natl. Acad. Sci. U.S.A.">
        <title>Twenty-five coregulated transcripts define a sterigmatocystin gene cluster in Aspergillus nidulans.</title>
        <authorList>
            <person name="Brown D.W."/>
            <person name="Yu J.-H."/>
            <person name="Kelkar H.S."/>
            <person name="Fernandes M."/>
            <person name="Nesbitt T.C."/>
            <person name="Keller N.P."/>
            <person name="Adams T.H."/>
            <person name="Leonard T.J."/>
        </authorList>
    </citation>
    <scope>NUCLEOTIDE SEQUENCE [GENOMIC DNA]</scope>
    <scope>INDUCTION</scope>
    <scope>FUNCTION</scope>
    <scope>PATHWAY</scope>
    <source>
        <strain>FGSC 26</strain>
    </source>
</reference>
<reference key="2">
    <citation type="journal article" date="2005" name="Nature">
        <title>Sequencing of Aspergillus nidulans and comparative analysis with A. fumigatus and A. oryzae.</title>
        <authorList>
            <person name="Galagan J.E."/>
            <person name="Calvo S.E."/>
            <person name="Cuomo C."/>
            <person name="Ma L.-J."/>
            <person name="Wortman J.R."/>
            <person name="Batzoglou S."/>
            <person name="Lee S.-I."/>
            <person name="Bastuerkmen M."/>
            <person name="Spevak C.C."/>
            <person name="Clutterbuck J."/>
            <person name="Kapitonov V."/>
            <person name="Jurka J."/>
            <person name="Scazzocchio C."/>
            <person name="Farman M.L."/>
            <person name="Butler J."/>
            <person name="Purcell S."/>
            <person name="Harris S."/>
            <person name="Braus G.H."/>
            <person name="Draht O."/>
            <person name="Busch S."/>
            <person name="D'Enfert C."/>
            <person name="Bouchier C."/>
            <person name="Goldman G.H."/>
            <person name="Bell-Pedersen D."/>
            <person name="Griffiths-Jones S."/>
            <person name="Doonan J.H."/>
            <person name="Yu J."/>
            <person name="Vienken K."/>
            <person name="Pain A."/>
            <person name="Freitag M."/>
            <person name="Selker E.U."/>
            <person name="Archer D.B."/>
            <person name="Penalva M.A."/>
            <person name="Oakley B.R."/>
            <person name="Momany M."/>
            <person name="Tanaka T."/>
            <person name="Kumagai T."/>
            <person name="Asai K."/>
            <person name="Machida M."/>
            <person name="Nierman W.C."/>
            <person name="Denning D.W."/>
            <person name="Caddick M.X."/>
            <person name="Hynes M."/>
            <person name="Paoletti M."/>
            <person name="Fischer R."/>
            <person name="Miller B.L."/>
            <person name="Dyer P.S."/>
            <person name="Sachs M.S."/>
            <person name="Osmani S.A."/>
            <person name="Birren B.W."/>
        </authorList>
    </citation>
    <scope>NUCLEOTIDE SEQUENCE [LARGE SCALE GENOMIC DNA]</scope>
    <source>
        <strain>FGSC A4 / ATCC 38163 / CBS 112.46 / NRRL 194 / M139</strain>
    </source>
</reference>
<reference key="3">
    <citation type="journal article" date="2009" name="Fungal Genet. Biol.">
        <title>The 2008 update of the Aspergillus nidulans genome annotation: a community effort.</title>
        <authorList>
            <person name="Wortman J.R."/>
            <person name="Gilsenan J.M."/>
            <person name="Joardar V."/>
            <person name="Deegan J."/>
            <person name="Clutterbuck J."/>
            <person name="Andersen M.R."/>
            <person name="Archer D."/>
            <person name="Bencina M."/>
            <person name="Braus G."/>
            <person name="Coutinho P."/>
            <person name="von Dohren H."/>
            <person name="Doonan J."/>
            <person name="Driessen A.J."/>
            <person name="Durek P."/>
            <person name="Espeso E."/>
            <person name="Fekete E."/>
            <person name="Flipphi M."/>
            <person name="Estrada C.G."/>
            <person name="Geysens S."/>
            <person name="Goldman G."/>
            <person name="de Groot P.W."/>
            <person name="Hansen K."/>
            <person name="Harris S.D."/>
            <person name="Heinekamp T."/>
            <person name="Helmstaedt K."/>
            <person name="Henrissat B."/>
            <person name="Hofmann G."/>
            <person name="Homan T."/>
            <person name="Horio T."/>
            <person name="Horiuchi H."/>
            <person name="James S."/>
            <person name="Jones M."/>
            <person name="Karaffa L."/>
            <person name="Karanyi Z."/>
            <person name="Kato M."/>
            <person name="Keller N."/>
            <person name="Kelly D.E."/>
            <person name="Kiel J.A."/>
            <person name="Kim J.M."/>
            <person name="van der Klei I.J."/>
            <person name="Klis F.M."/>
            <person name="Kovalchuk A."/>
            <person name="Krasevec N."/>
            <person name="Kubicek C.P."/>
            <person name="Liu B."/>
            <person name="Maccabe A."/>
            <person name="Meyer V."/>
            <person name="Mirabito P."/>
            <person name="Miskei M."/>
            <person name="Mos M."/>
            <person name="Mullins J."/>
            <person name="Nelson D.R."/>
            <person name="Nielsen J."/>
            <person name="Oakley B.R."/>
            <person name="Osmani S.A."/>
            <person name="Pakula T."/>
            <person name="Paszewski A."/>
            <person name="Paulsen I."/>
            <person name="Pilsyk S."/>
            <person name="Pocsi I."/>
            <person name="Punt P.J."/>
            <person name="Ram A.F."/>
            <person name="Ren Q."/>
            <person name="Robellet X."/>
            <person name="Robson G."/>
            <person name="Seiboth B."/>
            <person name="van Solingen P."/>
            <person name="Specht T."/>
            <person name="Sun J."/>
            <person name="Taheri-Talesh N."/>
            <person name="Takeshita N."/>
            <person name="Ussery D."/>
            <person name="vanKuyk P.A."/>
            <person name="Visser H."/>
            <person name="van de Vondervoort P.J."/>
            <person name="de Vries R.P."/>
            <person name="Walton J."/>
            <person name="Xiang X."/>
            <person name="Xiong Y."/>
            <person name="Zeng A.P."/>
            <person name="Brandt B.W."/>
            <person name="Cornell M.J."/>
            <person name="van den Hondel C.A."/>
            <person name="Visser J."/>
            <person name="Oliver S.G."/>
            <person name="Turner G."/>
        </authorList>
    </citation>
    <scope>GENOME REANNOTATION</scope>
    <source>
        <strain>FGSC A4 / ATCC 38163 / CBS 112.46 / NRRL 194 / M139</strain>
    </source>
</reference>
<reference key="4">
    <citation type="journal article" date="1994" name="Appl. Environ. Microbiol.">
        <title>Aspergillus nidulans verA is required for production of the mycotoxin sterigmatocystin.</title>
        <authorList>
            <person name="Keller N.P."/>
            <person name="Kantz N.J."/>
            <person name="Adams T.H."/>
        </authorList>
    </citation>
    <scope>FUNCTION</scope>
    <scope>INDUCTION</scope>
</reference>
<reference key="5">
    <citation type="journal article" date="1995" name="Appl. Environ. Microbiol.">
        <title>StcS, a putative P-450 monooxygenase, is required for the conversion of versicolorin A to sterigmatocystin in Aspergillus nidulans.</title>
        <authorList>
            <person name="Keller N.P."/>
            <person name="Segner S."/>
            <person name="Bhatnagar D."/>
            <person name="Adams T.H."/>
        </authorList>
    </citation>
    <scope>FUNCTION</scope>
</reference>
<reference key="6">
    <citation type="journal article" date="1995" name="J. Bacteriol.">
        <title>Sterigmatocystin biosynthesis in Aspergillus nidulans requires a novel type I polyketide synthase.</title>
        <authorList>
            <person name="Yu J.-H."/>
            <person name="Leonard T.J."/>
        </authorList>
    </citation>
    <scope>FUNCTION</scope>
    <source>
        <strain>FGSC A4 / ATCC 38163 / CBS 112.46 / NRRL 194 / M139</strain>
    </source>
</reference>
<reference key="7">
    <citation type="journal article" date="1996" name="Appl. Environ. Microbiol.">
        <title>Aspergillus nidulans stcP encodes an O-methyltransferase that is required for sterigmatocystin biosynthesis.</title>
        <authorList>
            <person name="Kelkar H.S."/>
            <person name="Keller N.P."/>
            <person name="Adams T.H."/>
        </authorList>
    </citation>
    <scope>FUNCTION</scope>
</reference>
<reference key="8">
    <citation type="journal article" date="1996" name="Proc. Natl. Acad. Sci. U.S.A.">
        <title>Aspergillus has distinct fatty acid synthases for primary and secondary metabolism.</title>
        <authorList>
            <person name="Brown D.W."/>
            <person name="Adams T.H."/>
            <person name="Keller N.P."/>
        </authorList>
    </citation>
    <scope>FUNCTION</scope>
</reference>
<reference key="9">
    <citation type="journal article" date="1997" name="J. Biol. Chem.">
        <title>Aspergillus nidulans stcL encodes a putative cytochrome P-450 monooxygenase required for bisfuran desaturation during aflatoxin/sterigmatocystin biosynthesis.</title>
        <authorList>
            <person name="Kelkar H.S."/>
            <person name="Skloss T.W."/>
            <person name="Haw J.F."/>
            <person name="Keller N.P."/>
            <person name="Adams T.H."/>
        </authorList>
    </citation>
    <scope>FUNCTION</scope>
</reference>
<reference key="10">
    <citation type="journal article" date="1998" name="Mol. Microbiol.">
        <title>Sequence-specific binding by Aspergillus nidulans aflR, a C6 zinc cluster protein regulating mycotoxin biosynthesis.</title>
        <authorList>
            <person name="Fernandes M."/>
            <person name="Keller N.P."/>
            <person name="Adams T.H."/>
        </authorList>
    </citation>
    <scope>INDUCTION</scope>
</reference>
<reference key="11">
    <citation type="journal article" date="2000" name="Appl. Environ. Microbiol.">
        <title>Requirement of monooxygenase-mediated steps for sterigmatocystin biosynthesis by Aspergillus nidulans.</title>
        <authorList>
            <person name="Keller N.P."/>
            <person name="Watanabe C.M."/>
            <person name="Kelkar H.S."/>
            <person name="Adams T.H."/>
            <person name="Townsend C.A."/>
        </authorList>
    </citation>
    <scope>FUNCTION</scope>
</reference>
<reference key="12">
    <citation type="journal article" date="2012" name="Metabolites">
        <title>Genetics of polyketide metabolism in Aspergillus nidulans.</title>
        <authorList>
            <person name="Klejnstrup M.L."/>
            <person name="Frandsen R.J."/>
            <person name="Holm D.K."/>
            <person name="Nielsen M.T."/>
            <person name="Mortensen U.H."/>
            <person name="Larsen T.O."/>
            <person name="Nielsen J.B."/>
        </authorList>
    </citation>
    <scope>REVIEW ON STERIGMATOCYSTIN BIOSYNTHESIS</scope>
</reference>
<evidence type="ECO:0000250" key="1">
    <source>
        <dbReference type="UniProtKB" id="Q12053"/>
    </source>
</evidence>
<evidence type="ECO:0000269" key="2">
    <source>
    </source>
</evidence>
<evidence type="ECO:0000269" key="3">
    <source>
    </source>
</evidence>
<evidence type="ECO:0000269" key="4">
    <source>
    </source>
</evidence>
<evidence type="ECO:0000269" key="5">
    <source>
    </source>
</evidence>
<evidence type="ECO:0000269" key="6">
    <source>
    </source>
</evidence>
<evidence type="ECO:0000269" key="7">
    <source>
    </source>
</evidence>
<evidence type="ECO:0000269" key="8">
    <source>
    </source>
</evidence>
<evidence type="ECO:0000269" key="9">
    <source>
    </source>
</evidence>
<evidence type="ECO:0000303" key="10">
    <source>
    </source>
</evidence>
<evidence type="ECO:0000303" key="11">
    <source>
    </source>
</evidence>
<evidence type="ECO:0000305" key="12"/>
<evidence type="ECO:0000305" key="13">
    <source>
    </source>
</evidence>
<organism>
    <name type="scientific">Emericella nidulans (strain FGSC A4 / ATCC 38163 / CBS 112.46 / NRRL 194 / M139)</name>
    <name type="common">Aspergillus nidulans</name>
    <dbReference type="NCBI Taxonomy" id="227321"/>
    <lineage>
        <taxon>Eukaryota</taxon>
        <taxon>Fungi</taxon>
        <taxon>Dikarya</taxon>
        <taxon>Ascomycota</taxon>
        <taxon>Pezizomycotina</taxon>
        <taxon>Eurotiomycetes</taxon>
        <taxon>Eurotiomycetidae</taxon>
        <taxon>Eurotiales</taxon>
        <taxon>Aspergillaceae</taxon>
        <taxon>Aspergillus</taxon>
        <taxon>Aspergillus subgen. Nidulantes</taxon>
    </lineage>
</organism>
<protein>
    <recommendedName>
        <fullName evidence="11">Oxidoreductase stcQ</fullName>
        <ecNumber evidence="13">1.-.-.-</ecNumber>
    </recommendedName>
    <alternativeName>
        <fullName evidence="11">Sterigmatocystin biosynthesis cluster protein Q</fullName>
    </alternativeName>
</protein>
<gene>
    <name evidence="11" type="primary">stcQ</name>
    <name type="ORF">AN7810</name>
</gene>
<comment type="function">
    <text evidence="1 2 3 5 6 7 8 10 13">Oxidoreductase; part of the gene cluster that mediates the biosynthesis of sterigmatocystin (ST), a polyketide-derived furanocoumarin which is part of the most toxic and carcinogenic compounds among the known mycotoxins (PubMed:8643646). The first step in the biosynthesis of sterigmatocystin is the production of hexanoate by the fatty acid synthase (FAS) units stcJ and stcK (PubMed:8962148). The polyketide backbone is assembled by the non-reducing polyketide synthase stcA by condensation of the starter hexanoyl-CoA and 7 malonyl-CoA extender units followed by cyclization and release of norsolorinic acid (By similarity). Norsolorinic acid is the first stable intermediate in the biosynthesis of sterigmatocystin and is converted into averantin (AVN) by the ketoreductase stcE which reduces the hexanoate ketone to an alcohol (Probable) (PubMed:8643646). Averantin is then oxidized into 5'-hydroxyaverantin (HAVN) by the cytochrome P450 monooxygenase stcF (PubMed:10618248). 5'-hydroxyaverantin is further converted to 5'-oxyaverantin (OAVN) by the 5'-hydroxyaverantin dehydrogenase stcG (PubMed:24957370). The next step is the conversion of OAVN into averufin (AVF) which is catalyzed by a yet to be identified enzyme (PubMed:24957370). The cytochrome P450 monooxygenase stcB and the flavin-binding monooxygenase stcW are both required for the conversion of averufin to 1-hydroxyversicolorone (PubMed:10618248). The esterase stcI probably catalyzes the formation of versiconal hemiacetal acetate from 1-hydroxyversicolorone (PubMed:24957370). The oxydoreductase stcN then probably catalyzes the biosynthetic step from versiconal to versicolorin B (VERB) (PubMed:24957370). The next step is performed by the versicolorin B desaturase stcL to produce versicolorin A (VERA) (PubMed:8999832). The ketoreductase stcU and the cytochrome P450 monooxygenase stcS are involved in the conversion of versicolorin A to demethylsterigmatocystin (PubMed:7486998). The Baeyer-Villiger oxidas stcQ and the reductase stcR might be involved in the biosynthetic step from versicolorin A to demethylsterigmatocystin (PubMed:24957370). The final step in the biosynthesis of sterigmatocystin is the methylation of demethylsterigmatocystin catalyzed by the methyltransferase stcP (PubMed:8900026).</text>
</comment>
<comment type="pathway">
    <text evidence="5">Mycotoxin biosynthesis; sterigmatocystin biosynthesis.</text>
</comment>
<comment type="induction">
    <text evidence="4 5 9">The genes forming the sterigmatocystin biosynthesis cluster are co-regulated and induced on oatmeal porridge or the fungal isolates were grown either on oatmeal porridge or in YEC medium (0.2% yeast extract, 5.0% corn steep liquor) (PubMed:8017929, PubMed:8643646). Expression is positively regulated by the cluster-specific transcription factor aflR that binds the palindromic sequence 5'-TCG(N5)CGA-3'found in the promoter (PubMed:9680223).</text>
</comment>
<comment type="similarity">
    <text evidence="12">Belongs to the avfA family.</text>
</comment>
<feature type="chain" id="PRO_0000072259" description="Oxidoreductase stcQ">
    <location>
        <begin position="1"/>
        <end position="274"/>
    </location>
</feature>
<proteinExistence type="evidence at transcript level"/>